<evidence type="ECO:0000255" key="1">
    <source>
        <dbReference type="HAMAP-Rule" id="MF_01521"/>
    </source>
</evidence>
<accession>A7GAF5</accession>
<feature type="chain" id="PRO_0000315564" description="Putative manganese efflux pump MntP 1">
    <location>
        <begin position="1"/>
        <end position="183"/>
    </location>
</feature>
<feature type="transmembrane region" description="Helical" evidence="1">
    <location>
        <begin position="6"/>
        <end position="26"/>
    </location>
</feature>
<feature type="transmembrane region" description="Helical" evidence="1">
    <location>
        <begin position="36"/>
        <end position="56"/>
    </location>
</feature>
<feature type="transmembrane region" description="Helical" evidence="1">
    <location>
        <begin position="64"/>
        <end position="84"/>
    </location>
</feature>
<feature type="transmembrane region" description="Helical" evidence="1">
    <location>
        <begin position="100"/>
        <end position="120"/>
    </location>
</feature>
<feature type="transmembrane region" description="Helical" evidence="1">
    <location>
        <begin position="130"/>
        <end position="150"/>
    </location>
</feature>
<feature type="transmembrane region" description="Helical" evidence="1">
    <location>
        <begin position="158"/>
        <end position="178"/>
    </location>
</feature>
<dbReference type="EMBL" id="CP000728">
    <property type="protein sequence ID" value="ABS39647.1"/>
    <property type="molecule type" value="Genomic_DNA"/>
</dbReference>
<dbReference type="RefSeq" id="WP_011987418.1">
    <property type="nucleotide sequence ID" value="NC_009699.1"/>
</dbReference>
<dbReference type="SMR" id="A7GAF5"/>
<dbReference type="KEGG" id="cbf:CLI_0469"/>
<dbReference type="HOGENOM" id="CLU_096410_3_0_9"/>
<dbReference type="Proteomes" id="UP000002410">
    <property type="component" value="Chromosome"/>
</dbReference>
<dbReference type="GO" id="GO:0005886">
    <property type="term" value="C:plasma membrane"/>
    <property type="evidence" value="ECO:0007669"/>
    <property type="project" value="UniProtKB-SubCell"/>
</dbReference>
<dbReference type="GO" id="GO:0005384">
    <property type="term" value="F:manganese ion transmembrane transporter activity"/>
    <property type="evidence" value="ECO:0007669"/>
    <property type="project" value="UniProtKB-UniRule"/>
</dbReference>
<dbReference type="HAMAP" id="MF_01521">
    <property type="entry name" value="MntP_pump"/>
    <property type="match status" value="1"/>
</dbReference>
<dbReference type="InterPro" id="IPR003810">
    <property type="entry name" value="Mntp/YtaF"/>
</dbReference>
<dbReference type="InterPro" id="IPR022929">
    <property type="entry name" value="Put_MntP"/>
</dbReference>
<dbReference type="PANTHER" id="PTHR35529">
    <property type="entry name" value="MANGANESE EFFLUX PUMP MNTP-RELATED"/>
    <property type="match status" value="1"/>
</dbReference>
<dbReference type="PANTHER" id="PTHR35529:SF1">
    <property type="entry name" value="MANGANESE EFFLUX PUMP MNTP-RELATED"/>
    <property type="match status" value="1"/>
</dbReference>
<dbReference type="Pfam" id="PF02659">
    <property type="entry name" value="Mntp"/>
    <property type="match status" value="1"/>
</dbReference>
<name>MNTP1_CLOBL</name>
<gene>
    <name evidence="1" type="primary">mntP1</name>
    <name type="ordered locus">CLI_0469</name>
</gene>
<comment type="function">
    <text evidence="1">Probably functions as a manganese efflux pump.</text>
</comment>
<comment type="subcellular location">
    <subcellularLocation>
        <location evidence="1">Cell membrane</location>
        <topology evidence="1">Multi-pass membrane protein</topology>
    </subcellularLocation>
</comment>
<comment type="similarity">
    <text evidence="1">Belongs to the MntP (TC 9.B.29) family.</text>
</comment>
<organism>
    <name type="scientific">Clostridium botulinum (strain Langeland / NCTC 10281 / Type F)</name>
    <dbReference type="NCBI Taxonomy" id="441772"/>
    <lineage>
        <taxon>Bacteria</taxon>
        <taxon>Bacillati</taxon>
        <taxon>Bacillota</taxon>
        <taxon>Clostridia</taxon>
        <taxon>Eubacteriales</taxon>
        <taxon>Clostridiaceae</taxon>
        <taxon>Clostridium</taxon>
    </lineage>
</organism>
<keyword id="KW-1003">Cell membrane</keyword>
<keyword id="KW-0406">Ion transport</keyword>
<keyword id="KW-0464">Manganese</keyword>
<keyword id="KW-0472">Membrane</keyword>
<keyword id="KW-0812">Transmembrane</keyword>
<keyword id="KW-1133">Transmembrane helix</keyword>
<keyword id="KW-0813">Transport</keyword>
<protein>
    <recommendedName>
        <fullName evidence="1">Putative manganese efflux pump MntP 1</fullName>
    </recommendedName>
</protein>
<reference key="1">
    <citation type="submission" date="2007-06" db="EMBL/GenBank/DDBJ databases">
        <authorList>
            <person name="Brinkac L.M."/>
            <person name="Daugherty S."/>
            <person name="Dodson R.J."/>
            <person name="Madupu R."/>
            <person name="Brown J.L."/>
            <person name="Bruce D."/>
            <person name="Detter C."/>
            <person name="Munk C."/>
            <person name="Smith L.A."/>
            <person name="Smith T.J."/>
            <person name="White O."/>
            <person name="Brettin T.S."/>
        </authorList>
    </citation>
    <scope>NUCLEOTIDE SEQUENCE [LARGE SCALE GENOMIC DNA]</scope>
    <source>
        <strain>Langeland / NCTC 10281 / Type F</strain>
    </source>
</reference>
<sequence length="183" mass="20259">MEVQELFLLALAISLDAFGVILCIGINKGITLKSSIIFVFSFGFFQFFLSFLGGYIGTIFNKYIVPIPTIVGGLIIIIVGILMITEGFKEKEESIFLNKIMYLILGVSVSIDALVIGFTTLSYINNLFYLFMSSLFMGLIATIICSLGIILSKYIKKISIISSYADYIGGIILILFGLKMLFF</sequence>
<proteinExistence type="inferred from homology"/>